<gene>
    <name evidence="1" type="primary">psbB</name>
</gene>
<reference key="1">
    <citation type="journal article" date="2008" name="J. Mol. Evol.">
        <title>Complete sequence of the Duckweed (Lemna minor) chloroplast genome: structural organization and phylogenetic relationships to other angiosperms.</title>
        <authorList>
            <person name="Mardanov A.V."/>
            <person name="Ravin N.V."/>
            <person name="Kuznetsov B.B."/>
            <person name="Samigullin T.H."/>
            <person name="Antonov A.S."/>
            <person name="Kolganova T.V."/>
            <person name="Skyabin K.G."/>
        </authorList>
    </citation>
    <scope>NUCLEOTIDE SEQUENCE [LARGE SCALE GENOMIC DNA]</scope>
</reference>
<evidence type="ECO:0000255" key="1">
    <source>
        <dbReference type="HAMAP-Rule" id="MF_01495"/>
    </source>
</evidence>
<sequence>MGLPWYRVHTVVLNDPGRLLSVHIMHTALVAGWAGSMALYELAVFDPSDPVLDPMWRQGMFVIPFMTRLGITNSWGGWSITGGTITNPGIWSYEGVAGAHIVFSGLCFLAAIWHWVYWDLEIFCDERTGKPSLDLPKIFGIHLFLSGVACFGFGAFHVTGLYGPGIWVSDPYGLTGKVQPVSPAWGAEGFDPFVPGGIASHHIAAGTLGILAGLFHLSVRPPQRLYKGLRMGNIETVLSSSIAAVFFAAFVVAGTMWYGSATTPIELFGPTRYQWDQGYFQQEIYRRISAGLAENLSLSEAWSKIPEKLAFYDYIGNNPAKGGLFRAGSMDNGDGIAIGWLGHPVFRDKEGRELFVRRMPTFFETFPVVLVDGDGIVRADVPFRRAESKYSVEQVGVTVEFYGGELNGVSYSDPATVKKYARRAQLGEIFELDRATLKSDGVFRSSPRGWFTFGHASFALLFFFGHIWHGARTLFRDVFAGIDPDLDAQVEFGAFQKLGDPTTKRQAV</sequence>
<feature type="chain" id="PRO_0000359834" description="Photosystem II CP47 reaction center protein">
    <location>
        <begin position="1"/>
        <end position="508"/>
    </location>
</feature>
<feature type="transmembrane region" description="Helical" evidence="1">
    <location>
        <begin position="21"/>
        <end position="36"/>
    </location>
</feature>
<feature type="transmembrane region" description="Helical" evidence="1">
    <location>
        <begin position="101"/>
        <end position="115"/>
    </location>
</feature>
<feature type="transmembrane region" description="Helical" evidence="1">
    <location>
        <begin position="140"/>
        <end position="156"/>
    </location>
</feature>
<feature type="transmembrane region" description="Helical" evidence="1">
    <location>
        <begin position="203"/>
        <end position="218"/>
    </location>
</feature>
<feature type="transmembrane region" description="Helical" evidence="1">
    <location>
        <begin position="237"/>
        <end position="252"/>
    </location>
</feature>
<feature type="transmembrane region" description="Helical" evidence="1">
    <location>
        <begin position="457"/>
        <end position="472"/>
    </location>
</feature>
<organism>
    <name type="scientific">Lemna minor</name>
    <name type="common">Common duckweed</name>
    <dbReference type="NCBI Taxonomy" id="4472"/>
    <lineage>
        <taxon>Eukaryota</taxon>
        <taxon>Viridiplantae</taxon>
        <taxon>Streptophyta</taxon>
        <taxon>Embryophyta</taxon>
        <taxon>Tracheophyta</taxon>
        <taxon>Spermatophyta</taxon>
        <taxon>Magnoliopsida</taxon>
        <taxon>Liliopsida</taxon>
        <taxon>Araceae</taxon>
        <taxon>Lemnoideae</taxon>
        <taxon>Lemna</taxon>
    </lineage>
</organism>
<protein>
    <recommendedName>
        <fullName evidence="1">Photosystem II CP47 reaction center protein</fullName>
    </recommendedName>
    <alternativeName>
        <fullName evidence="1">PSII 47 kDa protein</fullName>
    </alternativeName>
    <alternativeName>
        <fullName evidence="1">Protein CP-47</fullName>
    </alternativeName>
</protein>
<accession>A9L9C2</accession>
<geneLocation type="chloroplast"/>
<name>PSBB_LEMMI</name>
<proteinExistence type="inferred from homology"/>
<keyword id="KW-0148">Chlorophyll</keyword>
<keyword id="KW-0150">Chloroplast</keyword>
<keyword id="KW-0157">Chromophore</keyword>
<keyword id="KW-0472">Membrane</keyword>
<keyword id="KW-0602">Photosynthesis</keyword>
<keyword id="KW-0604">Photosystem II</keyword>
<keyword id="KW-0934">Plastid</keyword>
<keyword id="KW-0793">Thylakoid</keyword>
<keyword id="KW-0812">Transmembrane</keyword>
<keyword id="KW-1133">Transmembrane helix</keyword>
<comment type="function">
    <text evidence="1">One of the components of the core complex of photosystem II (PSII). It binds chlorophyll and helps catalyze the primary light-induced photochemical processes of PSII. PSII is a light-driven water:plastoquinone oxidoreductase, using light energy to abstract electrons from H(2)O, generating O(2) and a proton gradient subsequently used for ATP formation.</text>
</comment>
<comment type="cofactor">
    <text evidence="1">Binds multiple chlorophylls. PSII binds additional chlorophylls, carotenoids and specific lipids.</text>
</comment>
<comment type="subunit">
    <text evidence="1">PSII is composed of 1 copy each of membrane proteins PsbA, PsbB, PsbC, PsbD, PsbE, PsbF, PsbH, PsbI, PsbJ, PsbK, PsbL, PsbM, PsbT, PsbX, PsbY, PsbZ, Psb30/Ycf12, at least 3 peripheral proteins of the oxygen-evolving complex and a large number of cofactors. It forms dimeric complexes.</text>
</comment>
<comment type="subcellular location">
    <subcellularLocation>
        <location evidence="1">Plastid</location>
        <location evidence="1">Chloroplast thylakoid membrane</location>
        <topology evidence="1">Multi-pass membrane protein</topology>
    </subcellularLocation>
</comment>
<comment type="similarity">
    <text evidence="1">Belongs to the PsbB/PsbC family. PsbB subfamily.</text>
</comment>
<dbReference type="EMBL" id="DQ400350">
    <property type="protein sequence ID" value="ABD48521.1"/>
    <property type="molecule type" value="Genomic_DNA"/>
</dbReference>
<dbReference type="RefSeq" id="YP_001595534.1">
    <property type="nucleotide sequence ID" value="NC_010109.1"/>
</dbReference>
<dbReference type="SMR" id="A9L9C2"/>
<dbReference type="GeneID" id="5787618"/>
<dbReference type="GO" id="GO:0009535">
    <property type="term" value="C:chloroplast thylakoid membrane"/>
    <property type="evidence" value="ECO:0007669"/>
    <property type="project" value="UniProtKB-SubCell"/>
</dbReference>
<dbReference type="GO" id="GO:0009523">
    <property type="term" value="C:photosystem II"/>
    <property type="evidence" value="ECO:0007669"/>
    <property type="project" value="UniProtKB-KW"/>
</dbReference>
<dbReference type="GO" id="GO:0016168">
    <property type="term" value="F:chlorophyll binding"/>
    <property type="evidence" value="ECO:0007669"/>
    <property type="project" value="UniProtKB-UniRule"/>
</dbReference>
<dbReference type="GO" id="GO:0045156">
    <property type="term" value="F:electron transporter, transferring electrons within the cyclic electron transport pathway of photosynthesis activity"/>
    <property type="evidence" value="ECO:0007669"/>
    <property type="project" value="InterPro"/>
</dbReference>
<dbReference type="GO" id="GO:0009772">
    <property type="term" value="P:photosynthetic electron transport in photosystem II"/>
    <property type="evidence" value="ECO:0007669"/>
    <property type="project" value="InterPro"/>
</dbReference>
<dbReference type="FunFam" id="3.10.680.10:FF:000001">
    <property type="entry name" value="Photosystem II CP47 reaction center protein"/>
    <property type="match status" value="1"/>
</dbReference>
<dbReference type="Gene3D" id="3.10.680.10">
    <property type="entry name" value="Photosystem II CP47 reaction center protein"/>
    <property type="match status" value="1"/>
</dbReference>
<dbReference type="HAMAP" id="MF_01495">
    <property type="entry name" value="PSII_PsbB_CP47"/>
    <property type="match status" value="1"/>
</dbReference>
<dbReference type="InterPro" id="IPR000932">
    <property type="entry name" value="PS_antenna-like"/>
</dbReference>
<dbReference type="InterPro" id="IPR036001">
    <property type="entry name" value="PS_II_antenna-like_sf"/>
</dbReference>
<dbReference type="InterPro" id="IPR017486">
    <property type="entry name" value="PSII_PsbB"/>
</dbReference>
<dbReference type="NCBIfam" id="TIGR03039">
    <property type="entry name" value="PS_II_CP47"/>
    <property type="match status" value="1"/>
</dbReference>
<dbReference type="PANTHER" id="PTHR33180">
    <property type="entry name" value="PHOTOSYSTEM II CP43 REACTION CENTER PROTEIN"/>
    <property type="match status" value="1"/>
</dbReference>
<dbReference type="PANTHER" id="PTHR33180:SF38">
    <property type="entry name" value="PHOTOSYSTEM II CP47 REACTION CENTER PROTEIN"/>
    <property type="match status" value="1"/>
</dbReference>
<dbReference type="Pfam" id="PF00421">
    <property type="entry name" value="PSII"/>
    <property type="match status" value="1"/>
</dbReference>
<dbReference type="SUPFAM" id="SSF161077">
    <property type="entry name" value="Photosystem II antenna protein-like"/>
    <property type="match status" value="1"/>
</dbReference>